<feature type="chain" id="PRO_1000143191" description="Small ribosomal subunit protein uS15">
    <location>
        <begin position="1"/>
        <end position="90"/>
    </location>
</feature>
<accession>B3CM20</accession>
<sequence length="90" mass="10482">MSITSQKKKSLISTYAIKEDDTGSSFVQCAILTERISNLTEHFKAHKHDHNSKRGLLILIGRRRKHLNYIKRKFGNEAYQELIEKLGIRK</sequence>
<keyword id="KW-0687">Ribonucleoprotein</keyword>
<keyword id="KW-0689">Ribosomal protein</keyword>
<keyword id="KW-0694">RNA-binding</keyword>
<keyword id="KW-0699">rRNA-binding</keyword>
<reference key="1">
    <citation type="journal article" date="2008" name="Mol. Biol. Evol.">
        <title>Genome evolution of Wolbachia strain wPip from the Culex pipiens group.</title>
        <authorList>
            <person name="Klasson L."/>
            <person name="Walker T."/>
            <person name="Sebaihia M."/>
            <person name="Sanders M.J."/>
            <person name="Quail M.A."/>
            <person name="Lord A."/>
            <person name="Sanders S."/>
            <person name="Earl J."/>
            <person name="O'Neill S.L."/>
            <person name="Thomson N."/>
            <person name="Sinkins S.P."/>
            <person name="Parkhill J."/>
        </authorList>
    </citation>
    <scope>NUCLEOTIDE SEQUENCE [LARGE SCALE GENOMIC DNA]</scope>
    <source>
        <strain>wPip</strain>
    </source>
</reference>
<gene>
    <name evidence="1" type="primary">rpsO</name>
    <name type="ordered locus">WP0830</name>
</gene>
<proteinExistence type="inferred from homology"/>
<organism>
    <name type="scientific">Wolbachia pipientis subsp. Culex pipiens (strain wPip)</name>
    <dbReference type="NCBI Taxonomy" id="570417"/>
    <lineage>
        <taxon>Bacteria</taxon>
        <taxon>Pseudomonadati</taxon>
        <taxon>Pseudomonadota</taxon>
        <taxon>Alphaproteobacteria</taxon>
        <taxon>Rickettsiales</taxon>
        <taxon>Anaplasmataceae</taxon>
        <taxon>Wolbachieae</taxon>
        <taxon>Wolbachia</taxon>
    </lineage>
</organism>
<dbReference type="EMBL" id="AM999887">
    <property type="protein sequence ID" value="CAQ54938.1"/>
    <property type="molecule type" value="Genomic_DNA"/>
</dbReference>
<dbReference type="RefSeq" id="WP_007302237.1">
    <property type="nucleotide sequence ID" value="NC_010981.1"/>
</dbReference>
<dbReference type="SMR" id="B3CM20"/>
<dbReference type="KEGG" id="wpi:WP0830"/>
<dbReference type="eggNOG" id="COG0184">
    <property type="taxonomic scope" value="Bacteria"/>
</dbReference>
<dbReference type="HOGENOM" id="CLU_148518_0_0_5"/>
<dbReference type="Proteomes" id="UP000008814">
    <property type="component" value="Chromosome"/>
</dbReference>
<dbReference type="GO" id="GO:0022627">
    <property type="term" value="C:cytosolic small ribosomal subunit"/>
    <property type="evidence" value="ECO:0007669"/>
    <property type="project" value="TreeGrafter"/>
</dbReference>
<dbReference type="GO" id="GO:0019843">
    <property type="term" value="F:rRNA binding"/>
    <property type="evidence" value="ECO:0007669"/>
    <property type="project" value="UniProtKB-UniRule"/>
</dbReference>
<dbReference type="GO" id="GO:0003735">
    <property type="term" value="F:structural constituent of ribosome"/>
    <property type="evidence" value="ECO:0007669"/>
    <property type="project" value="InterPro"/>
</dbReference>
<dbReference type="GO" id="GO:0006412">
    <property type="term" value="P:translation"/>
    <property type="evidence" value="ECO:0007669"/>
    <property type="project" value="UniProtKB-UniRule"/>
</dbReference>
<dbReference type="CDD" id="cd00353">
    <property type="entry name" value="Ribosomal_S15p_S13e"/>
    <property type="match status" value="1"/>
</dbReference>
<dbReference type="FunFam" id="1.10.287.10:FF:000002">
    <property type="entry name" value="30S ribosomal protein S15"/>
    <property type="match status" value="1"/>
</dbReference>
<dbReference type="Gene3D" id="6.10.250.3130">
    <property type="match status" value="1"/>
</dbReference>
<dbReference type="Gene3D" id="1.10.287.10">
    <property type="entry name" value="S15/NS1, RNA-binding"/>
    <property type="match status" value="1"/>
</dbReference>
<dbReference type="HAMAP" id="MF_01343_B">
    <property type="entry name" value="Ribosomal_uS15_B"/>
    <property type="match status" value="1"/>
</dbReference>
<dbReference type="InterPro" id="IPR000589">
    <property type="entry name" value="Ribosomal_uS15"/>
</dbReference>
<dbReference type="InterPro" id="IPR005290">
    <property type="entry name" value="Ribosomal_uS15_bac-type"/>
</dbReference>
<dbReference type="InterPro" id="IPR009068">
    <property type="entry name" value="uS15_NS1_RNA-bd_sf"/>
</dbReference>
<dbReference type="NCBIfam" id="TIGR00952">
    <property type="entry name" value="S15_bact"/>
    <property type="match status" value="1"/>
</dbReference>
<dbReference type="PANTHER" id="PTHR23321">
    <property type="entry name" value="RIBOSOMAL PROTEIN S15, BACTERIAL AND ORGANELLAR"/>
    <property type="match status" value="1"/>
</dbReference>
<dbReference type="PANTHER" id="PTHR23321:SF26">
    <property type="entry name" value="SMALL RIBOSOMAL SUBUNIT PROTEIN US15M"/>
    <property type="match status" value="1"/>
</dbReference>
<dbReference type="Pfam" id="PF00312">
    <property type="entry name" value="Ribosomal_S15"/>
    <property type="match status" value="1"/>
</dbReference>
<dbReference type="SMART" id="SM01387">
    <property type="entry name" value="Ribosomal_S15"/>
    <property type="match status" value="1"/>
</dbReference>
<dbReference type="SUPFAM" id="SSF47060">
    <property type="entry name" value="S15/NS1 RNA-binding domain"/>
    <property type="match status" value="1"/>
</dbReference>
<evidence type="ECO:0000255" key="1">
    <source>
        <dbReference type="HAMAP-Rule" id="MF_01343"/>
    </source>
</evidence>
<evidence type="ECO:0000305" key="2"/>
<name>RS15_WOLPP</name>
<protein>
    <recommendedName>
        <fullName evidence="1">Small ribosomal subunit protein uS15</fullName>
    </recommendedName>
    <alternativeName>
        <fullName evidence="2">30S ribosomal protein S15</fullName>
    </alternativeName>
</protein>
<comment type="function">
    <text evidence="1">One of the primary rRNA binding proteins, it binds directly to 16S rRNA where it helps nucleate assembly of the platform of the 30S subunit by binding and bridging several RNA helices of the 16S rRNA.</text>
</comment>
<comment type="function">
    <text evidence="1">Forms an intersubunit bridge (bridge B4) with the 23S rRNA of the 50S subunit in the ribosome.</text>
</comment>
<comment type="subunit">
    <text evidence="1">Part of the 30S ribosomal subunit. Forms a bridge to the 50S subunit in the 70S ribosome, contacting the 23S rRNA.</text>
</comment>
<comment type="similarity">
    <text evidence="1">Belongs to the universal ribosomal protein uS15 family.</text>
</comment>